<proteinExistence type="inferred from homology"/>
<dbReference type="EC" id="1.15.1.1" evidence="3"/>
<dbReference type="EMBL" id="AB078724">
    <property type="protein sequence ID" value="BAC56175.1"/>
    <property type="status" value="ALT_FRAME"/>
    <property type="molecule type" value="Genomic_DNA"/>
</dbReference>
<dbReference type="EMBL" id="AP007155">
    <property type="status" value="NOT_ANNOTATED_CDS"/>
    <property type="molecule type" value="Genomic_DNA"/>
</dbReference>
<dbReference type="EMBL" id="AY625481">
    <property type="protein sequence ID" value="AAU04411.1"/>
    <property type="molecule type" value="Genomic_DNA"/>
</dbReference>
<dbReference type="SMR" id="Q877B6"/>
<dbReference type="STRING" id="510516.Q877B6"/>
<dbReference type="Proteomes" id="UP000006564">
    <property type="component" value="Chromosome 2"/>
</dbReference>
<dbReference type="GO" id="GO:0005759">
    <property type="term" value="C:mitochondrial matrix"/>
    <property type="evidence" value="ECO:0007669"/>
    <property type="project" value="UniProtKB-SubCell"/>
</dbReference>
<dbReference type="GO" id="GO:0030145">
    <property type="term" value="F:manganese ion binding"/>
    <property type="evidence" value="ECO:0007669"/>
    <property type="project" value="EnsemblFungi"/>
</dbReference>
<dbReference type="GO" id="GO:0004784">
    <property type="term" value="F:superoxide dismutase activity"/>
    <property type="evidence" value="ECO:0007669"/>
    <property type="project" value="UniProtKB-EC"/>
</dbReference>
<dbReference type="FunFam" id="1.10.287.990:FF:000001">
    <property type="entry name" value="Superoxide dismutase"/>
    <property type="match status" value="1"/>
</dbReference>
<dbReference type="FunFam" id="3.55.40.20:FF:000004">
    <property type="entry name" value="Superoxide dismutase [Fe]"/>
    <property type="match status" value="1"/>
</dbReference>
<dbReference type="Gene3D" id="1.10.287.990">
    <property type="entry name" value="Fe,Mn superoxide dismutase (SOD) domain"/>
    <property type="match status" value="1"/>
</dbReference>
<dbReference type="Gene3D" id="3.55.40.20">
    <property type="entry name" value="Iron/manganese superoxide dismutase, C-terminal domain"/>
    <property type="match status" value="1"/>
</dbReference>
<dbReference type="InterPro" id="IPR050265">
    <property type="entry name" value="Fe/Mn_Superoxide_Dismutase"/>
</dbReference>
<dbReference type="InterPro" id="IPR001189">
    <property type="entry name" value="Mn/Fe_SOD"/>
</dbReference>
<dbReference type="InterPro" id="IPR019833">
    <property type="entry name" value="Mn/Fe_SOD_BS"/>
</dbReference>
<dbReference type="InterPro" id="IPR019832">
    <property type="entry name" value="Mn/Fe_SOD_C"/>
</dbReference>
<dbReference type="InterPro" id="IPR019831">
    <property type="entry name" value="Mn/Fe_SOD_N"/>
</dbReference>
<dbReference type="InterPro" id="IPR036324">
    <property type="entry name" value="Mn/Fe_SOD_N_sf"/>
</dbReference>
<dbReference type="InterPro" id="IPR036314">
    <property type="entry name" value="SOD_C_sf"/>
</dbReference>
<dbReference type="PANTHER" id="PTHR11404:SF29">
    <property type="entry name" value="SUPEROXIDE DISMUTASE"/>
    <property type="match status" value="1"/>
</dbReference>
<dbReference type="PANTHER" id="PTHR11404">
    <property type="entry name" value="SUPEROXIDE DISMUTASE 2"/>
    <property type="match status" value="1"/>
</dbReference>
<dbReference type="Pfam" id="PF02777">
    <property type="entry name" value="Sod_Fe_C"/>
    <property type="match status" value="1"/>
</dbReference>
<dbReference type="Pfam" id="PF00081">
    <property type="entry name" value="Sod_Fe_N"/>
    <property type="match status" value="1"/>
</dbReference>
<dbReference type="PIRSF" id="PIRSF000349">
    <property type="entry name" value="SODismutase"/>
    <property type="match status" value="1"/>
</dbReference>
<dbReference type="PRINTS" id="PR01703">
    <property type="entry name" value="MNSODISMTASE"/>
</dbReference>
<dbReference type="SUPFAM" id="SSF54719">
    <property type="entry name" value="Fe,Mn superoxide dismutase (SOD), C-terminal domain"/>
    <property type="match status" value="1"/>
</dbReference>
<dbReference type="SUPFAM" id="SSF46609">
    <property type="entry name" value="Fe,Mn superoxide dismutase (SOD), N-terminal domain"/>
    <property type="match status" value="1"/>
</dbReference>
<dbReference type="PROSITE" id="PS00088">
    <property type="entry name" value="SOD_MN"/>
    <property type="match status" value="1"/>
</dbReference>
<evidence type="ECO:0000250" key="1"/>
<evidence type="ECO:0000250" key="2">
    <source>
        <dbReference type="UniProtKB" id="P04179"/>
    </source>
</evidence>
<evidence type="ECO:0000250" key="3">
    <source>
        <dbReference type="UniProtKB" id="P0A0J3"/>
    </source>
</evidence>
<evidence type="ECO:0000250" key="4">
    <source>
        <dbReference type="UniProtKB" id="Q9UQX0"/>
    </source>
</evidence>
<evidence type="ECO:0000305" key="5"/>
<keyword id="KW-0049">Antioxidant</keyword>
<keyword id="KW-0464">Manganese</keyword>
<keyword id="KW-0479">Metal-binding</keyword>
<keyword id="KW-0496">Mitochondrion</keyword>
<keyword id="KW-0560">Oxidoreductase</keyword>
<keyword id="KW-1185">Reference proteome</keyword>
<keyword id="KW-0809">Transit peptide</keyword>
<reference key="1">
    <citation type="journal article" date="2004" name="Biosci. Biotechnol. Biochem.">
        <title>Isolation of a novel promoter for efficient protein production in Aspergillus oryzae.</title>
        <authorList>
            <person name="Ishida H."/>
            <person name="Hata Y."/>
            <person name="Kawato A."/>
            <person name="Abe Y."/>
            <person name="Kashiwagi Y."/>
        </authorList>
    </citation>
    <scope>NUCLEOTIDE SEQUENCE [GENOMIC DNA]</scope>
    <source>
        <strain>OSI 1013</strain>
    </source>
</reference>
<reference key="2">
    <citation type="journal article" date="2005" name="Nature">
        <title>Genome sequencing and analysis of Aspergillus oryzae.</title>
        <authorList>
            <person name="Machida M."/>
            <person name="Asai K."/>
            <person name="Sano M."/>
            <person name="Tanaka T."/>
            <person name="Kumagai T."/>
            <person name="Terai G."/>
            <person name="Kusumoto K."/>
            <person name="Arima T."/>
            <person name="Akita O."/>
            <person name="Kashiwagi Y."/>
            <person name="Abe K."/>
            <person name="Gomi K."/>
            <person name="Horiuchi H."/>
            <person name="Kitamoto K."/>
            <person name="Kobayashi T."/>
            <person name="Takeuchi M."/>
            <person name="Denning D.W."/>
            <person name="Galagan J.E."/>
            <person name="Nierman W.C."/>
            <person name="Yu J."/>
            <person name="Archer D.B."/>
            <person name="Bennett J.W."/>
            <person name="Bhatnagar D."/>
            <person name="Cleveland T.E."/>
            <person name="Fedorova N.D."/>
            <person name="Gotoh O."/>
            <person name="Horikawa H."/>
            <person name="Hosoyama A."/>
            <person name="Ichinomiya M."/>
            <person name="Igarashi R."/>
            <person name="Iwashita K."/>
            <person name="Juvvadi P.R."/>
            <person name="Kato M."/>
            <person name="Kato Y."/>
            <person name="Kin T."/>
            <person name="Kokubun A."/>
            <person name="Maeda H."/>
            <person name="Maeyama N."/>
            <person name="Maruyama J."/>
            <person name="Nagasaki H."/>
            <person name="Nakajima T."/>
            <person name="Oda K."/>
            <person name="Okada K."/>
            <person name="Paulsen I."/>
            <person name="Sakamoto K."/>
            <person name="Sawano T."/>
            <person name="Takahashi M."/>
            <person name="Takase K."/>
            <person name="Terabayashi Y."/>
            <person name="Wortman J.R."/>
            <person name="Yamada O."/>
            <person name="Yamagata Y."/>
            <person name="Anazawa H."/>
            <person name="Hata Y."/>
            <person name="Koide Y."/>
            <person name="Komori T."/>
            <person name="Koyama Y."/>
            <person name="Minetoki T."/>
            <person name="Suharnan S."/>
            <person name="Tanaka A."/>
            <person name="Isono K."/>
            <person name="Kuhara S."/>
            <person name="Ogasawara N."/>
            <person name="Kikuchi H."/>
        </authorList>
    </citation>
    <scope>NUCLEOTIDE SEQUENCE [LARGE SCALE GENOMIC DNA]</scope>
    <source>
        <strain>ATCC 42149 / RIB 40</strain>
    </source>
</reference>
<reference key="3">
    <citation type="journal article" date="2006" name="Mol. Phylogenet. Evol.">
        <title>Manganese superoxide dismutase based phylogeny of pathogenic fungi.</title>
        <authorList>
            <person name="Frealle E."/>
            <person name="Noel C."/>
            <person name="Nolard N."/>
            <person name="Symoens F."/>
            <person name="Felipe M.S."/>
            <person name="Dei-Cas E."/>
            <person name="Camus D."/>
            <person name="Viscogliosi E."/>
            <person name="Delhaes L."/>
        </authorList>
    </citation>
    <scope>NUCLEOTIDE SEQUENCE [GENOMIC DNA] OF 33-166</scope>
</reference>
<accession>Q877B6</accession>
<accession>Q537X2</accession>
<organism>
    <name type="scientific">Aspergillus oryzae (strain ATCC 42149 / RIB 40)</name>
    <name type="common">Yellow koji mold</name>
    <dbReference type="NCBI Taxonomy" id="510516"/>
    <lineage>
        <taxon>Eukaryota</taxon>
        <taxon>Fungi</taxon>
        <taxon>Dikarya</taxon>
        <taxon>Ascomycota</taxon>
        <taxon>Pezizomycotina</taxon>
        <taxon>Eurotiomycetes</taxon>
        <taxon>Eurotiomycetidae</taxon>
        <taxon>Eurotiales</taxon>
        <taxon>Aspergillaceae</taxon>
        <taxon>Aspergillus</taxon>
        <taxon>Aspergillus subgen. Circumdati</taxon>
    </lineage>
</organism>
<name>SODM_ASPOR</name>
<comment type="function">
    <text evidence="2">Destroys superoxide anion radicals which are normally produced within the cells and which are toxic to biological systems.</text>
</comment>
<comment type="catalytic activity">
    <reaction evidence="3">
        <text>2 superoxide + 2 H(+) = H2O2 + O2</text>
        <dbReference type="Rhea" id="RHEA:20696"/>
        <dbReference type="ChEBI" id="CHEBI:15378"/>
        <dbReference type="ChEBI" id="CHEBI:15379"/>
        <dbReference type="ChEBI" id="CHEBI:16240"/>
        <dbReference type="ChEBI" id="CHEBI:18421"/>
        <dbReference type="EC" id="1.15.1.1"/>
    </reaction>
</comment>
<comment type="cofactor">
    <cofactor evidence="4">
        <name>Mn(2+)</name>
        <dbReference type="ChEBI" id="CHEBI:29035"/>
    </cofactor>
    <text evidence="4">Binds 1 Mn(2+) ion per subunit.</text>
</comment>
<comment type="subunit">
    <text evidence="2">Homotetramer.</text>
</comment>
<comment type="subcellular location">
    <subcellularLocation>
        <location evidence="4">Mitochondrion matrix</location>
    </subcellularLocation>
</comment>
<comment type="similarity">
    <text evidence="5">Belongs to the iron/manganese superoxide dismutase family.</text>
</comment>
<comment type="sequence caution" evidence="5">
    <conflict type="frameshift">
        <sequence resource="EMBL-CDS" id="BAC56175"/>
    </conflict>
</comment>
<sequence>MATTFSLPPLPYAYDALEPVICKQIMEIHHQKHHQTYITNLNAALSAQSTALAANNIPQLINLQQKIKFNGGGHINHSLFWKNLAPHASPETNIDQAAPVLKAAIEAQYGSVEKFKEAFGATLLGLQGSGWGWLVANGPGGKLEIVSTKDQDPVTDKVPVFGVDMWEHAYYLQYFNNKASYVEGIWKVLNWRTAEDRFKNGVEGSALLKL</sequence>
<protein>
    <recommendedName>
        <fullName>Superoxide dismutase [Mn], mitochondrial</fullName>
        <ecNumber evidence="3">1.15.1.1</ecNumber>
    </recommendedName>
</protein>
<feature type="transit peptide" description="Mitochondrion" evidence="1">
    <location>
        <begin position="1"/>
        <end status="unknown"/>
    </location>
</feature>
<feature type="chain" id="PRO_0000043336" description="Superoxide dismutase [Mn], mitochondrial">
    <location>
        <begin status="unknown"/>
        <end position="210"/>
    </location>
</feature>
<feature type="binding site" evidence="2">
    <location>
        <position position="29"/>
    </location>
    <ligand>
        <name>Mn(2+)</name>
        <dbReference type="ChEBI" id="CHEBI:29035"/>
    </ligand>
</feature>
<feature type="binding site" evidence="2">
    <location>
        <position position="77"/>
    </location>
    <ligand>
        <name>Mn(2+)</name>
        <dbReference type="ChEBI" id="CHEBI:29035"/>
    </ligand>
</feature>
<feature type="binding site" evidence="2">
    <location>
        <position position="164"/>
    </location>
    <ligand>
        <name>Mn(2+)</name>
        <dbReference type="ChEBI" id="CHEBI:29035"/>
    </ligand>
</feature>
<feature type="binding site" evidence="2">
    <location>
        <position position="168"/>
    </location>
    <ligand>
        <name>Mn(2+)</name>
        <dbReference type="ChEBI" id="CHEBI:29035"/>
    </ligand>
</feature>
<feature type="sequence conflict" description="In Ref. 2." evidence="5" ref="2">
    <original>D</original>
    <variation>N</variation>
    <location>
        <position position="150"/>
    </location>
</feature>
<gene>
    <name type="primary">sodB</name>
    <name type="synonym">sodM</name>
    <name type="ORF">AO090003000475-A</name>
</gene>